<proteinExistence type="inferred from homology"/>
<evidence type="ECO:0000255" key="1">
    <source>
        <dbReference type="HAMAP-Rule" id="MF_00003"/>
    </source>
</evidence>
<feature type="chain" id="PRO_1000000099" description="Ribosome-binding factor A">
    <location>
        <begin position="1"/>
        <end position="116"/>
    </location>
</feature>
<comment type="function">
    <text evidence="1">One of several proteins that assist in the late maturation steps of the functional core of the 30S ribosomal subunit. Associates with free 30S ribosomal subunits (but not with 30S subunits that are part of 70S ribosomes or polysomes). Required for efficient processing of 16S rRNA. May interact with the 5'-terminal helix region of 16S rRNA.</text>
</comment>
<comment type="subunit">
    <text evidence="1">Monomer. Binds 30S ribosomal subunits, but not 50S ribosomal subunits or 70S ribosomes.</text>
</comment>
<comment type="subcellular location">
    <subcellularLocation>
        <location evidence="1">Cytoplasm</location>
    </subcellularLocation>
</comment>
<comment type="similarity">
    <text evidence="1">Belongs to the RbfA family.</text>
</comment>
<name>RBFA_CLOPS</name>
<gene>
    <name evidence="1" type="primary">rbfA</name>
    <name type="ordered locus">CPR_1657</name>
</gene>
<sequence length="116" mass="13448">MANFRGKRINEEVRKEVSDIIRNQIKDPRLTAMVSVTQVEVTKDLRYAKVFVSLFAKNDEEKEESLKALKSSAGFIRREVGNRVKLRSTPEILFEEDNSIDNAMYIESLLNKIKEK</sequence>
<keyword id="KW-0963">Cytoplasm</keyword>
<keyword id="KW-0690">Ribosome biogenesis</keyword>
<dbReference type="EMBL" id="CP000312">
    <property type="protein sequence ID" value="ABG86599.1"/>
    <property type="molecule type" value="Genomic_DNA"/>
</dbReference>
<dbReference type="RefSeq" id="WP_003449473.1">
    <property type="nucleotide sequence ID" value="NZ_CAXVKH010000001.1"/>
</dbReference>
<dbReference type="SMR" id="Q0SSD5"/>
<dbReference type="GeneID" id="93001777"/>
<dbReference type="KEGG" id="cpr:CPR_1657"/>
<dbReference type="Proteomes" id="UP000001824">
    <property type="component" value="Chromosome"/>
</dbReference>
<dbReference type="GO" id="GO:0005829">
    <property type="term" value="C:cytosol"/>
    <property type="evidence" value="ECO:0007669"/>
    <property type="project" value="TreeGrafter"/>
</dbReference>
<dbReference type="GO" id="GO:0043024">
    <property type="term" value="F:ribosomal small subunit binding"/>
    <property type="evidence" value="ECO:0007669"/>
    <property type="project" value="TreeGrafter"/>
</dbReference>
<dbReference type="GO" id="GO:0030490">
    <property type="term" value="P:maturation of SSU-rRNA"/>
    <property type="evidence" value="ECO:0007669"/>
    <property type="project" value="UniProtKB-UniRule"/>
</dbReference>
<dbReference type="Gene3D" id="3.30.300.20">
    <property type="match status" value="1"/>
</dbReference>
<dbReference type="HAMAP" id="MF_00003">
    <property type="entry name" value="RbfA"/>
    <property type="match status" value="1"/>
</dbReference>
<dbReference type="InterPro" id="IPR015946">
    <property type="entry name" value="KH_dom-like_a/b"/>
</dbReference>
<dbReference type="InterPro" id="IPR000238">
    <property type="entry name" value="RbfA"/>
</dbReference>
<dbReference type="InterPro" id="IPR023799">
    <property type="entry name" value="RbfA_dom_sf"/>
</dbReference>
<dbReference type="InterPro" id="IPR020053">
    <property type="entry name" value="Ribosome-bd_factorA_CS"/>
</dbReference>
<dbReference type="NCBIfam" id="TIGR00082">
    <property type="entry name" value="rbfA"/>
    <property type="match status" value="1"/>
</dbReference>
<dbReference type="PANTHER" id="PTHR33515">
    <property type="entry name" value="RIBOSOME-BINDING FACTOR A, CHLOROPLASTIC-RELATED"/>
    <property type="match status" value="1"/>
</dbReference>
<dbReference type="PANTHER" id="PTHR33515:SF1">
    <property type="entry name" value="RIBOSOME-BINDING FACTOR A, CHLOROPLASTIC-RELATED"/>
    <property type="match status" value="1"/>
</dbReference>
<dbReference type="Pfam" id="PF02033">
    <property type="entry name" value="RBFA"/>
    <property type="match status" value="1"/>
</dbReference>
<dbReference type="SUPFAM" id="SSF89919">
    <property type="entry name" value="Ribosome-binding factor A, RbfA"/>
    <property type="match status" value="1"/>
</dbReference>
<dbReference type="PROSITE" id="PS01319">
    <property type="entry name" value="RBFA"/>
    <property type="match status" value="1"/>
</dbReference>
<protein>
    <recommendedName>
        <fullName evidence="1">Ribosome-binding factor A</fullName>
    </recommendedName>
</protein>
<accession>Q0SSD5</accession>
<organism>
    <name type="scientific">Clostridium perfringens (strain SM101 / Type A)</name>
    <dbReference type="NCBI Taxonomy" id="289380"/>
    <lineage>
        <taxon>Bacteria</taxon>
        <taxon>Bacillati</taxon>
        <taxon>Bacillota</taxon>
        <taxon>Clostridia</taxon>
        <taxon>Eubacteriales</taxon>
        <taxon>Clostridiaceae</taxon>
        <taxon>Clostridium</taxon>
    </lineage>
</organism>
<reference key="1">
    <citation type="journal article" date="2006" name="Genome Res.">
        <title>Skewed genomic variability in strains of the toxigenic bacterial pathogen, Clostridium perfringens.</title>
        <authorList>
            <person name="Myers G.S.A."/>
            <person name="Rasko D.A."/>
            <person name="Cheung J.K."/>
            <person name="Ravel J."/>
            <person name="Seshadri R."/>
            <person name="DeBoy R.T."/>
            <person name="Ren Q."/>
            <person name="Varga J."/>
            <person name="Awad M.M."/>
            <person name="Brinkac L.M."/>
            <person name="Daugherty S.C."/>
            <person name="Haft D.H."/>
            <person name="Dodson R.J."/>
            <person name="Madupu R."/>
            <person name="Nelson W.C."/>
            <person name="Rosovitz M.J."/>
            <person name="Sullivan S.A."/>
            <person name="Khouri H."/>
            <person name="Dimitrov G.I."/>
            <person name="Watkins K.L."/>
            <person name="Mulligan S."/>
            <person name="Benton J."/>
            <person name="Radune D."/>
            <person name="Fisher D.J."/>
            <person name="Atkins H.S."/>
            <person name="Hiscox T."/>
            <person name="Jost B.H."/>
            <person name="Billington S.J."/>
            <person name="Songer J.G."/>
            <person name="McClane B.A."/>
            <person name="Titball R.W."/>
            <person name="Rood J.I."/>
            <person name="Melville S.B."/>
            <person name="Paulsen I.T."/>
        </authorList>
    </citation>
    <scope>NUCLEOTIDE SEQUENCE [LARGE SCALE GENOMIC DNA]</scope>
    <source>
        <strain>SM101 / Type A</strain>
    </source>
</reference>